<organism>
    <name type="scientific">Vibrio parahaemolyticus serotype O3:K6 (strain RIMD 2210633)</name>
    <dbReference type="NCBI Taxonomy" id="223926"/>
    <lineage>
        <taxon>Bacteria</taxon>
        <taxon>Pseudomonadati</taxon>
        <taxon>Pseudomonadota</taxon>
        <taxon>Gammaproteobacteria</taxon>
        <taxon>Vibrionales</taxon>
        <taxon>Vibrionaceae</taxon>
        <taxon>Vibrio</taxon>
    </lineage>
</organism>
<comment type="similarity">
    <text evidence="1">Belongs to the UPF0251 family.</text>
</comment>
<feature type="chain" id="PRO_0000147593" description="UPF0251 protein VPA0321">
    <location>
        <begin position="1"/>
        <end position="96"/>
    </location>
</feature>
<dbReference type="EMBL" id="BA000032">
    <property type="protein sequence ID" value="BAC61665.1"/>
    <property type="molecule type" value="Genomic_DNA"/>
</dbReference>
<dbReference type="RefSeq" id="NP_799832.1">
    <property type="nucleotide sequence ID" value="NC_004605.1"/>
</dbReference>
<dbReference type="RefSeq" id="WP_005464150.1">
    <property type="nucleotide sequence ID" value="NC_004605.1"/>
</dbReference>
<dbReference type="SMR" id="Q87JD1"/>
<dbReference type="GeneID" id="1191010"/>
<dbReference type="KEGG" id="vpa:VPA0321"/>
<dbReference type="PATRIC" id="fig|223926.6.peg.3272"/>
<dbReference type="eggNOG" id="COG1342">
    <property type="taxonomic scope" value="Bacteria"/>
</dbReference>
<dbReference type="HOGENOM" id="CLU_094511_2_1_6"/>
<dbReference type="Proteomes" id="UP000002493">
    <property type="component" value="Chromosome 2"/>
</dbReference>
<dbReference type="Gene3D" id="1.10.10.10">
    <property type="entry name" value="Winged helix-like DNA-binding domain superfamily/Winged helix DNA-binding domain"/>
    <property type="match status" value="1"/>
</dbReference>
<dbReference type="HAMAP" id="MF_00674">
    <property type="entry name" value="UPF0251"/>
    <property type="match status" value="1"/>
</dbReference>
<dbReference type="InterPro" id="IPR013324">
    <property type="entry name" value="RNA_pol_sigma_r3/r4-like"/>
</dbReference>
<dbReference type="InterPro" id="IPR002852">
    <property type="entry name" value="UPF0251"/>
</dbReference>
<dbReference type="InterPro" id="IPR036388">
    <property type="entry name" value="WH-like_DNA-bd_sf"/>
</dbReference>
<dbReference type="PANTHER" id="PTHR37478">
    <property type="match status" value="1"/>
</dbReference>
<dbReference type="PANTHER" id="PTHR37478:SF2">
    <property type="entry name" value="UPF0251 PROTEIN TK0562"/>
    <property type="match status" value="1"/>
</dbReference>
<dbReference type="Pfam" id="PF02001">
    <property type="entry name" value="DUF134"/>
    <property type="match status" value="1"/>
</dbReference>
<dbReference type="SUPFAM" id="SSF88659">
    <property type="entry name" value="Sigma3 and sigma4 domains of RNA polymerase sigma factors"/>
    <property type="match status" value="1"/>
</dbReference>
<proteinExistence type="inferred from homology"/>
<gene>
    <name type="ordered locus">VPA0321</name>
</gene>
<sequence length="96" mass="10677">MARPKIERRICGRAAHHCFKPNGVPFHQLEQVAILPEELEALRLADLEGLSQQQAADQMGISRQTFGNTVKSARFKVAKSLVEGHALVFPNEESNL</sequence>
<evidence type="ECO:0000305" key="1"/>
<reference key="1">
    <citation type="journal article" date="2003" name="Lancet">
        <title>Genome sequence of Vibrio parahaemolyticus: a pathogenic mechanism distinct from that of V. cholerae.</title>
        <authorList>
            <person name="Makino K."/>
            <person name="Oshima K."/>
            <person name="Kurokawa K."/>
            <person name="Yokoyama K."/>
            <person name="Uda T."/>
            <person name="Tagomori K."/>
            <person name="Iijima Y."/>
            <person name="Najima M."/>
            <person name="Nakano M."/>
            <person name="Yamashita A."/>
            <person name="Kubota Y."/>
            <person name="Kimura S."/>
            <person name="Yasunaga T."/>
            <person name="Honda T."/>
            <person name="Shinagawa H."/>
            <person name="Hattori M."/>
            <person name="Iida T."/>
        </authorList>
    </citation>
    <scope>NUCLEOTIDE SEQUENCE [LARGE SCALE GENOMIC DNA]</scope>
    <source>
        <strain>RIMD 2210633</strain>
    </source>
</reference>
<name>Y4321_VIBPA</name>
<protein>
    <recommendedName>
        <fullName>UPF0251 protein VPA0321</fullName>
    </recommendedName>
</protein>
<accession>Q87JD1</accession>